<name>COAX_EHRRW</name>
<keyword id="KW-0067">ATP-binding</keyword>
<keyword id="KW-0173">Coenzyme A biosynthesis</keyword>
<keyword id="KW-0963">Cytoplasm</keyword>
<keyword id="KW-0418">Kinase</keyword>
<keyword id="KW-0547">Nucleotide-binding</keyword>
<keyword id="KW-0630">Potassium</keyword>
<keyword id="KW-0808">Transferase</keyword>
<accession>Q5HBZ7</accession>
<accession>Q5FCY8</accession>
<sequence>MLIIDIGNTNIKFGICINNQIIQTLRISSQPRRTADEYFFFLNTIINQLNINNFTITHIIISSVVPSITKPMIELSTHYFNITPTIINNQHADICNIKIDLNDKLLGSDRLASIIGAVTLYPNKNLLVISMGTATVFNLISKERSIYGQVITPGAHIMAQSMRQHTALLPEISQIKVNKVVHNTLFYAIEAGVYWGYIAMVEGIVKQILHEENKDLHIVATGGNSILFIDHKNFIKNIDPDLTMKGMIYLHNMLFNK</sequence>
<protein>
    <recommendedName>
        <fullName evidence="1">Type III pantothenate kinase</fullName>
        <ecNumber evidence="1">2.7.1.33</ecNumber>
    </recommendedName>
    <alternativeName>
        <fullName evidence="1">PanK-III</fullName>
    </alternativeName>
    <alternativeName>
        <fullName evidence="1">Pantothenic acid kinase</fullName>
    </alternativeName>
</protein>
<comment type="function">
    <text evidence="1">Catalyzes the phosphorylation of pantothenate (Pan), the first step in CoA biosynthesis.</text>
</comment>
<comment type="catalytic activity">
    <reaction evidence="1">
        <text>(R)-pantothenate + ATP = (R)-4'-phosphopantothenate + ADP + H(+)</text>
        <dbReference type="Rhea" id="RHEA:16373"/>
        <dbReference type="ChEBI" id="CHEBI:10986"/>
        <dbReference type="ChEBI" id="CHEBI:15378"/>
        <dbReference type="ChEBI" id="CHEBI:29032"/>
        <dbReference type="ChEBI" id="CHEBI:30616"/>
        <dbReference type="ChEBI" id="CHEBI:456216"/>
        <dbReference type="EC" id="2.7.1.33"/>
    </reaction>
</comment>
<comment type="cofactor">
    <cofactor evidence="1">
        <name>NH4(+)</name>
        <dbReference type="ChEBI" id="CHEBI:28938"/>
    </cofactor>
    <cofactor evidence="1">
        <name>K(+)</name>
        <dbReference type="ChEBI" id="CHEBI:29103"/>
    </cofactor>
    <text evidence="1">A monovalent cation. Ammonium or potassium.</text>
</comment>
<comment type="pathway">
    <text evidence="1">Cofactor biosynthesis; coenzyme A biosynthesis; CoA from (R)-pantothenate: step 1/5.</text>
</comment>
<comment type="subunit">
    <text evidence="1">Homodimer.</text>
</comment>
<comment type="subcellular location">
    <subcellularLocation>
        <location evidence="1">Cytoplasm</location>
    </subcellularLocation>
</comment>
<comment type="similarity">
    <text evidence="1">Belongs to the type III pantothenate kinase family.</text>
</comment>
<reference key="1">
    <citation type="journal article" date="2005" name="Proc. Natl. Acad. Sci. U.S.A.">
        <title>The genome of the heartwater agent Ehrlichia ruminantium contains multiple tandem repeats of actively variable copy number.</title>
        <authorList>
            <person name="Collins N.E."/>
            <person name="Liebenberg J."/>
            <person name="de Villiers E.P."/>
            <person name="Brayton K.A."/>
            <person name="Louw E."/>
            <person name="Pretorius A."/>
            <person name="Faber F.E."/>
            <person name="van Heerden H."/>
            <person name="Josemans A."/>
            <person name="van Kleef M."/>
            <person name="Steyn H.C."/>
            <person name="van Strijp M.F."/>
            <person name="Zweygarth E."/>
            <person name="Jongejan F."/>
            <person name="Maillard J.C."/>
            <person name="Berthier D."/>
            <person name="Botha M."/>
            <person name="Joubert F."/>
            <person name="Corton C.H."/>
            <person name="Thomson N.R."/>
            <person name="Allsopp M.T."/>
            <person name="Allsopp B.A."/>
        </authorList>
    </citation>
    <scope>NUCLEOTIDE SEQUENCE [LARGE SCALE GENOMIC DNA]</scope>
    <source>
        <strain>Welgevonden</strain>
    </source>
</reference>
<reference key="2">
    <citation type="journal article" date="2006" name="J. Bacteriol.">
        <title>Comparative genomic analysis of three strains of Ehrlichia ruminantium reveals an active process of genome size plasticity.</title>
        <authorList>
            <person name="Frutos R."/>
            <person name="Viari A."/>
            <person name="Ferraz C."/>
            <person name="Morgat A."/>
            <person name="Eychenie S."/>
            <person name="Kandassamy Y."/>
            <person name="Chantal I."/>
            <person name="Bensaid A."/>
            <person name="Coissac E."/>
            <person name="Vachiery N."/>
            <person name="Demaille J."/>
            <person name="Martinez D."/>
        </authorList>
    </citation>
    <scope>NUCLEOTIDE SEQUENCE [LARGE SCALE GENOMIC DNA]</scope>
    <source>
        <strain>Welgevonden</strain>
    </source>
</reference>
<organism>
    <name type="scientific">Ehrlichia ruminantium (strain Welgevonden)</name>
    <dbReference type="NCBI Taxonomy" id="254945"/>
    <lineage>
        <taxon>Bacteria</taxon>
        <taxon>Pseudomonadati</taxon>
        <taxon>Pseudomonadota</taxon>
        <taxon>Alphaproteobacteria</taxon>
        <taxon>Rickettsiales</taxon>
        <taxon>Anaplasmataceae</taxon>
        <taxon>Ehrlichia</taxon>
    </lineage>
</organism>
<dbReference type="EC" id="2.7.1.33" evidence="1"/>
<dbReference type="EMBL" id="CR767821">
    <property type="protein sequence ID" value="CAH57896.1"/>
    <property type="molecule type" value="Genomic_DNA"/>
</dbReference>
<dbReference type="EMBL" id="CR925678">
    <property type="protein sequence ID" value="CAI26673.1"/>
    <property type="molecule type" value="Genomic_DNA"/>
</dbReference>
<dbReference type="RefSeq" id="WP_011154864.1">
    <property type="nucleotide sequence ID" value="NC_005295.2"/>
</dbReference>
<dbReference type="SMR" id="Q5HBZ7"/>
<dbReference type="GeneID" id="33057887"/>
<dbReference type="KEGG" id="eru:Erum1800"/>
<dbReference type="KEGG" id="erw:ERWE_CDS_01790"/>
<dbReference type="eggNOG" id="COG1521">
    <property type="taxonomic scope" value="Bacteria"/>
</dbReference>
<dbReference type="HOGENOM" id="CLU_066627_1_0_5"/>
<dbReference type="UniPathway" id="UPA00241">
    <property type="reaction ID" value="UER00352"/>
</dbReference>
<dbReference type="Proteomes" id="UP000001021">
    <property type="component" value="Chromosome"/>
</dbReference>
<dbReference type="GO" id="GO:0005737">
    <property type="term" value="C:cytoplasm"/>
    <property type="evidence" value="ECO:0007669"/>
    <property type="project" value="UniProtKB-SubCell"/>
</dbReference>
<dbReference type="GO" id="GO:0005524">
    <property type="term" value="F:ATP binding"/>
    <property type="evidence" value="ECO:0007669"/>
    <property type="project" value="UniProtKB-UniRule"/>
</dbReference>
<dbReference type="GO" id="GO:0004594">
    <property type="term" value="F:pantothenate kinase activity"/>
    <property type="evidence" value="ECO:0007669"/>
    <property type="project" value="UniProtKB-UniRule"/>
</dbReference>
<dbReference type="GO" id="GO:0015937">
    <property type="term" value="P:coenzyme A biosynthetic process"/>
    <property type="evidence" value="ECO:0007669"/>
    <property type="project" value="UniProtKB-UniRule"/>
</dbReference>
<dbReference type="CDD" id="cd24015">
    <property type="entry name" value="ASKHA_NBD_PanK-III"/>
    <property type="match status" value="1"/>
</dbReference>
<dbReference type="Gene3D" id="3.30.420.40">
    <property type="match status" value="2"/>
</dbReference>
<dbReference type="HAMAP" id="MF_01274">
    <property type="entry name" value="Pantothen_kinase_3"/>
    <property type="match status" value="1"/>
</dbReference>
<dbReference type="InterPro" id="IPR043129">
    <property type="entry name" value="ATPase_NBD"/>
</dbReference>
<dbReference type="InterPro" id="IPR004619">
    <property type="entry name" value="Type_III_PanK"/>
</dbReference>
<dbReference type="NCBIfam" id="TIGR00671">
    <property type="entry name" value="baf"/>
    <property type="match status" value="1"/>
</dbReference>
<dbReference type="NCBIfam" id="NF009848">
    <property type="entry name" value="PRK13318.1-6"/>
    <property type="match status" value="1"/>
</dbReference>
<dbReference type="PANTHER" id="PTHR34265">
    <property type="entry name" value="TYPE III PANTOTHENATE KINASE"/>
    <property type="match status" value="1"/>
</dbReference>
<dbReference type="PANTHER" id="PTHR34265:SF1">
    <property type="entry name" value="TYPE III PANTOTHENATE KINASE"/>
    <property type="match status" value="1"/>
</dbReference>
<dbReference type="Pfam" id="PF03309">
    <property type="entry name" value="Pan_kinase"/>
    <property type="match status" value="1"/>
</dbReference>
<dbReference type="SUPFAM" id="SSF53067">
    <property type="entry name" value="Actin-like ATPase domain"/>
    <property type="match status" value="2"/>
</dbReference>
<proteinExistence type="inferred from homology"/>
<evidence type="ECO:0000255" key="1">
    <source>
        <dbReference type="HAMAP-Rule" id="MF_01274"/>
    </source>
</evidence>
<gene>
    <name evidence="1" type="primary">coaX</name>
    <name type="ordered locus">Erum1800</name>
    <name type="ordered locus">ERWE_CDS_01790</name>
</gene>
<feature type="chain" id="PRO_0000267528" description="Type III pantothenate kinase">
    <location>
        <begin position="1"/>
        <end position="257"/>
    </location>
</feature>
<feature type="active site" description="Proton acceptor" evidence="1">
    <location>
        <position position="109"/>
    </location>
</feature>
<feature type="binding site" evidence="1">
    <location>
        <begin position="5"/>
        <end position="12"/>
    </location>
    <ligand>
        <name>ATP</name>
        <dbReference type="ChEBI" id="CHEBI:30616"/>
    </ligand>
</feature>
<feature type="binding site" evidence="1">
    <location>
        <begin position="107"/>
        <end position="110"/>
    </location>
    <ligand>
        <name>substrate</name>
    </ligand>
</feature>
<feature type="binding site" evidence="1">
    <location>
        <position position="133"/>
    </location>
    <ligand>
        <name>ATP</name>
        <dbReference type="ChEBI" id="CHEBI:30616"/>
    </ligand>
</feature>